<name>GPDA_HALOH</name>
<reference key="1">
    <citation type="journal article" date="2009" name="PLoS ONE">
        <title>Genome analysis of the anaerobic thermohalophilic bacterium Halothermothrix orenii.</title>
        <authorList>
            <person name="Mavromatis K."/>
            <person name="Ivanova N."/>
            <person name="Anderson I."/>
            <person name="Lykidis A."/>
            <person name="Hooper S.D."/>
            <person name="Sun H."/>
            <person name="Kunin V."/>
            <person name="Lapidus A."/>
            <person name="Hugenholtz P."/>
            <person name="Patel B."/>
            <person name="Kyrpides N.C."/>
        </authorList>
    </citation>
    <scope>NUCLEOTIDE SEQUENCE [LARGE SCALE GENOMIC DNA]</scope>
    <source>
        <strain>H 168 / OCM 544 / DSM 9562</strain>
    </source>
</reference>
<gene>
    <name evidence="1" type="primary">gpsA</name>
    <name type="ordered locus">Hore_10550</name>
</gene>
<accession>B8CWZ1</accession>
<dbReference type="EC" id="1.1.1.94" evidence="1"/>
<dbReference type="EMBL" id="CP001098">
    <property type="protein sequence ID" value="ACL69810.1"/>
    <property type="molecule type" value="Genomic_DNA"/>
</dbReference>
<dbReference type="RefSeq" id="WP_012635995.1">
    <property type="nucleotide sequence ID" value="NC_011899.1"/>
</dbReference>
<dbReference type="SMR" id="B8CWZ1"/>
<dbReference type="STRING" id="373903.Hore_10550"/>
<dbReference type="KEGG" id="hor:Hore_10550"/>
<dbReference type="eggNOG" id="COG0240">
    <property type="taxonomic scope" value="Bacteria"/>
</dbReference>
<dbReference type="HOGENOM" id="CLU_033449_0_2_9"/>
<dbReference type="OrthoDB" id="9812273at2"/>
<dbReference type="UniPathway" id="UPA00940"/>
<dbReference type="Proteomes" id="UP000000719">
    <property type="component" value="Chromosome"/>
</dbReference>
<dbReference type="GO" id="GO:0005829">
    <property type="term" value="C:cytosol"/>
    <property type="evidence" value="ECO:0007669"/>
    <property type="project" value="TreeGrafter"/>
</dbReference>
<dbReference type="GO" id="GO:0047952">
    <property type="term" value="F:glycerol-3-phosphate dehydrogenase [NAD(P)+] activity"/>
    <property type="evidence" value="ECO:0007669"/>
    <property type="project" value="UniProtKB-UniRule"/>
</dbReference>
<dbReference type="GO" id="GO:0051287">
    <property type="term" value="F:NAD binding"/>
    <property type="evidence" value="ECO:0007669"/>
    <property type="project" value="InterPro"/>
</dbReference>
<dbReference type="GO" id="GO:0005975">
    <property type="term" value="P:carbohydrate metabolic process"/>
    <property type="evidence" value="ECO:0007669"/>
    <property type="project" value="InterPro"/>
</dbReference>
<dbReference type="GO" id="GO:0046167">
    <property type="term" value="P:glycerol-3-phosphate biosynthetic process"/>
    <property type="evidence" value="ECO:0007669"/>
    <property type="project" value="UniProtKB-UniRule"/>
</dbReference>
<dbReference type="GO" id="GO:0046168">
    <property type="term" value="P:glycerol-3-phosphate catabolic process"/>
    <property type="evidence" value="ECO:0007669"/>
    <property type="project" value="InterPro"/>
</dbReference>
<dbReference type="GO" id="GO:0006650">
    <property type="term" value="P:glycerophospholipid metabolic process"/>
    <property type="evidence" value="ECO:0007669"/>
    <property type="project" value="UniProtKB-UniRule"/>
</dbReference>
<dbReference type="GO" id="GO:0008654">
    <property type="term" value="P:phospholipid biosynthetic process"/>
    <property type="evidence" value="ECO:0007669"/>
    <property type="project" value="UniProtKB-KW"/>
</dbReference>
<dbReference type="FunFam" id="1.10.1040.10:FF:000001">
    <property type="entry name" value="Glycerol-3-phosphate dehydrogenase [NAD(P)+]"/>
    <property type="match status" value="1"/>
</dbReference>
<dbReference type="FunFam" id="3.40.50.720:FF:000019">
    <property type="entry name" value="Glycerol-3-phosphate dehydrogenase [NAD(P)+]"/>
    <property type="match status" value="1"/>
</dbReference>
<dbReference type="Gene3D" id="1.10.1040.10">
    <property type="entry name" value="N-(1-d-carboxylethyl)-l-norvaline Dehydrogenase, domain 2"/>
    <property type="match status" value="1"/>
</dbReference>
<dbReference type="Gene3D" id="3.40.50.720">
    <property type="entry name" value="NAD(P)-binding Rossmann-like Domain"/>
    <property type="match status" value="1"/>
</dbReference>
<dbReference type="HAMAP" id="MF_00394">
    <property type="entry name" value="NAD_Glyc3P_dehydrog"/>
    <property type="match status" value="1"/>
</dbReference>
<dbReference type="InterPro" id="IPR008927">
    <property type="entry name" value="6-PGluconate_DH-like_C_sf"/>
</dbReference>
<dbReference type="InterPro" id="IPR013328">
    <property type="entry name" value="6PGD_dom2"/>
</dbReference>
<dbReference type="InterPro" id="IPR006168">
    <property type="entry name" value="G3P_DH_NAD-dep"/>
</dbReference>
<dbReference type="InterPro" id="IPR006109">
    <property type="entry name" value="G3P_DH_NAD-dep_C"/>
</dbReference>
<dbReference type="InterPro" id="IPR011128">
    <property type="entry name" value="G3P_DH_NAD-dep_N"/>
</dbReference>
<dbReference type="InterPro" id="IPR036291">
    <property type="entry name" value="NAD(P)-bd_dom_sf"/>
</dbReference>
<dbReference type="NCBIfam" id="NF000940">
    <property type="entry name" value="PRK00094.1-2"/>
    <property type="match status" value="1"/>
</dbReference>
<dbReference type="NCBIfam" id="NF000941">
    <property type="entry name" value="PRK00094.1-3"/>
    <property type="match status" value="1"/>
</dbReference>
<dbReference type="NCBIfam" id="NF000942">
    <property type="entry name" value="PRK00094.1-4"/>
    <property type="match status" value="1"/>
</dbReference>
<dbReference type="PANTHER" id="PTHR11728">
    <property type="entry name" value="GLYCEROL-3-PHOSPHATE DEHYDROGENASE"/>
    <property type="match status" value="1"/>
</dbReference>
<dbReference type="PANTHER" id="PTHR11728:SF1">
    <property type="entry name" value="GLYCEROL-3-PHOSPHATE DEHYDROGENASE [NAD(+)] 2, CHLOROPLASTIC"/>
    <property type="match status" value="1"/>
</dbReference>
<dbReference type="Pfam" id="PF07479">
    <property type="entry name" value="NAD_Gly3P_dh_C"/>
    <property type="match status" value="1"/>
</dbReference>
<dbReference type="Pfam" id="PF01210">
    <property type="entry name" value="NAD_Gly3P_dh_N"/>
    <property type="match status" value="1"/>
</dbReference>
<dbReference type="PIRSF" id="PIRSF000114">
    <property type="entry name" value="Glycerol-3-P_dh"/>
    <property type="match status" value="1"/>
</dbReference>
<dbReference type="PRINTS" id="PR00077">
    <property type="entry name" value="GPDHDRGNASE"/>
</dbReference>
<dbReference type="SUPFAM" id="SSF48179">
    <property type="entry name" value="6-phosphogluconate dehydrogenase C-terminal domain-like"/>
    <property type="match status" value="1"/>
</dbReference>
<dbReference type="SUPFAM" id="SSF51735">
    <property type="entry name" value="NAD(P)-binding Rossmann-fold domains"/>
    <property type="match status" value="1"/>
</dbReference>
<dbReference type="PROSITE" id="PS00957">
    <property type="entry name" value="NAD_G3PDH"/>
    <property type="match status" value="1"/>
</dbReference>
<proteinExistence type="inferred from homology"/>
<protein>
    <recommendedName>
        <fullName evidence="1">Glycerol-3-phosphate dehydrogenase [NAD(P)+]</fullName>
        <ecNumber evidence="1">1.1.1.94</ecNumber>
    </recommendedName>
    <alternativeName>
        <fullName evidence="1">NAD(P)(+)-dependent glycerol-3-phosphate dehydrogenase</fullName>
    </alternativeName>
    <alternativeName>
        <fullName evidence="1">NAD(P)H-dependent dihydroxyacetone-phosphate reductase</fullName>
    </alternativeName>
</protein>
<comment type="function">
    <text evidence="1">Catalyzes the reduction of the glycolytic intermediate dihydroxyacetone phosphate (DHAP) to sn-glycerol 3-phosphate (G3P), the key precursor for phospholipid synthesis.</text>
</comment>
<comment type="catalytic activity">
    <reaction evidence="1">
        <text>sn-glycerol 3-phosphate + NAD(+) = dihydroxyacetone phosphate + NADH + H(+)</text>
        <dbReference type="Rhea" id="RHEA:11092"/>
        <dbReference type="ChEBI" id="CHEBI:15378"/>
        <dbReference type="ChEBI" id="CHEBI:57540"/>
        <dbReference type="ChEBI" id="CHEBI:57597"/>
        <dbReference type="ChEBI" id="CHEBI:57642"/>
        <dbReference type="ChEBI" id="CHEBI:57945"/>
        <dbReference type="EC" id="1.1.1.94"/>
    </reaction>
    <physiologicalReaction direction="right-to-left" evidence="1">
        <dbReference type="Rhea" id="RHEA:11094"/>
    </physiologicalReaction>
</comment>
<comment type="catalytic activity">
    <reaction evidence="1">
        <text>sn-glycerol 3-phosphate + NADP(+) = dihydroxyacetone phosphate + NADPH + H(+)</text>
        <dbReference type="Rhea" id="RHEA:11096"/>
        <dbReference type="ChEBI" id="CHEBI:15378"/>
        <dbReference type="ChEBI" id="CHEBI:57597"/>
        <dbReference type="ChEBI" id="CHEBI:57642"/>
        <dbReference type="ChEBI" id="CHEBI:57783"/>
        <dbReference type="ChEBI" id="CHEBI:58349"/>
        <dbReference type="EC" id="1.1.1.94"/>
    </reaction>
    <physiologicalReaction direction="right-to-left" evidence="1">
        <dbReference type="Rhea" id="RHEA:11098"/>
    </physiologicalReaction>
</comment>
<comment type="pathway">
    <text evidence="1">Membrane lipid metabolism; glycerophospholipid metabolism.</text>
</comment>
<comment type="subcellular location">
    <subcellularLocation>
        <location evidence="1">Cytoplasm</location>
    </subcellularLocation>
</comment>
<comment type="similarity">
    <text evidence="1">Belongs to the NAD-dependent glycerol-3-phosphate dehydrogenase family.</text>
</comment>
<sequence>MSDRISIIGGGSWGTAIAYLLAINGKKVLMYVRDNNQKDSINKKRVNNKYFPDHQLPEGIEATTDIKEVVSFSNIVFLAVPTHATRAVMKKINHLLNEEQILVSTAKGIEEVNFLRNSQIIKEYCNNKIAVLSGPTHAEEVIDGLPTAVVVASRDKEVAESIQDIMMSSTFRVYTNPDVVGVEMGGAVKNIIAVAAGIADGLGYGDNTMAALITRGLHEMSRLGVHFGGKLLTFAGLAGMGDLVVTCTSNHSRNRRFGIKVGKGMNTEEALSSVNQVVEGVRTTRAVYDWYQGKKLNFELPITSQIYQVLFNDKNPLDAVNELMLRGPKHEIEEVVDDVNW</sequence>
<feature type="chain" id="PRO_1000190156" description="Glycerol-3-phosphate dehydrogenase [NAD(P)+]">
    <location>
        <begin position="1"/>
        <end position="341"/>
    </location>
</feature>
<feature type="active site" description="Proton acceptor" evidence="1">
    <location>
        <position position="189"/>
    </location>
</feature>
<feature type="binding site" evidence="1">
    <location>
        <position position="12"/>
    </location>
    <ligand>
        <name>NADPH</name>
        <dbReference type="ChEBI" id="CHEBI:57783"/>
    </ligand>
</feature>
<feature type="binding site" evidence="1">
    <location>
        <position position="13"/>
    </location>
    <ligand>
        <name>NADPH</name>
        <dbReference type="ChEBI" id="CHEBI:57783"/>
    </ligand>
</feature>
<feature type="binding site" evidence="1">
    <location>
        <position position="33"/>
    </location>
    <ligand>
        <name>NADPH</name>
        <dbReference type="ChEBI" id="CHEBI:57783"/>
    </ligand>
</feature>
<feature type="binding site" evidence="1">
    <location>
        <position position="107"/>
    </location>
    <ligand>
        <name>NADPH</name>
        <dbReference type="ChEBI" id="CHEBI:57783"/>
    </ligand>
</feature>
<feature type="binding site" evidence="1">
    <location>
        <position position="107"/>
    </location>
    <ligand>
        <name>sn-glycerol 3-phosphate</name>
        <dbReference type="ChEBI" id="CHEBI:57597"/>
    </ligand>
</feature>
<feature type="binding site" evidence="1">
    <location>
        <position position="134"/>
    </location>
    <ligand>
        <name>sn-glycerol 3-phosphate</name>
        <dbReference type="ChEBI" id="CHEBI:57597"/>
    </ligand>
</feature>
<feature type="binding site" evidence="1">
    <location>
        <position position="136"/>
    </location>
    <ligand>
        <name>sn-glycerol 3-phosphate</name>
        <dbReference type="ChEBI" id="CHEBI:57597"/>
    </ligand>
</feature>
<feature type="binding site" evidence="1">
    <location>
        <position position="138"/>
    </location>
    <ligand>
        <name>NADPH</name>
        <dbReference type="ChEBI" id="CHEBI:57783"/>
    </ligand>
</feature>
<feature type="binding site" evidence="1">
    <location>
        <position position="189"/>
    </location>
    <ligand>
        <name>sn-glycerol 3-phosphate</name>
        <dbReference type="ChEBI" id="CHEBI:57597"/>
    </ligand>
</feature>
<feature type="binding site" evidence="1">
    <location>
        <position position="242"/>
    </location>
    <ligand>
        <name>sn-glycerol 3-phosphate</name>
        <dbReference type="ChEBI" id="CHEBI:57597"/>
    </ligand>
</feature>
<feature type="binding site" evidence="1">
    <location>
        <position position="252"/>
    </location>
    <ligand>
        <name>sn-glycerol 3-phosphate</name>
        <dbReference type="ChEBI" id="CHEBI:57597"/>
    </ligand>
</feature>
<feature type="binding site" evidence="1">
    <location>
        <position position="253"/>
    </location>
    <ligand>
        <name>NADPH</name>
        <dbReference type="ChEBI" id="CHEBI:57783"/>
    </ligand>
</feature>
<feature type="binding site" evidence="1">
    <location>
        <position position="253"/>
    </location>
    <ligand>
        <name>sn-glycerol 3-phosphate</name>
        <dbReference type="ChEBI" id="CHEBI:57597"/>
    </ligand>
</feature>
<feature type="binding site" evidence="1">
    <location>
        <position position="254"/>
    </location>
    <ligand>
        <name>sn-glycerol 3-phosphate</name>
        <dbReference type="ChEBI" id="CHEBI:57597"/>
    </ligand>
</feature>
<feature type="binding site" evidence="1">
    <location>
        <position position="277"/>
    </location>
    <ligand>
        <name>NADPH</name>
        <dbReference type="ChEBI" id="CHEBI:57783"/>
    </ligand>
</feature>
<feature type="binding site" evidence="1">
    <location>
        <position position="279"/>
    </location>
    <ligand>
        <name>NADPH</name>
        <dbReference type="ChEBI" id="CHEBI:57783"/>
    </ligand>
</feature>
<organism>
    <name type="scientific">Halothermothrix orenii (strain H 168 / OCM 544 / DSM 9562)</name>
    <dbReference type="NCBI Taxonomy" id="373903"/>
    <lineage>
        <taxon>Bacteria</taxon>
        <taxon>Bacillati</taxon>
        <taxon>Bacillota</taxon>
        <taxon>Clostridia</taxon>
        <taxon>Halanaerobiales</taxon>
        <taxon>Halothermotrichaceae</taxon>
        <taxon>Halothermothrix</taxon>
    </lineage>
</organism>
<evidence type="ECO:0000255" key="1">
    <source>
        <dbReference type="HAMAP-Rule" id="MF_00394"/>
    </source>
</evidence>
<keyword id="KW-0963">Cytoplasm</keyword>
<keyword id="KW-0444">Lipid biosynthesis</keyword>
<keyword id="KW-0443">Lipid metabolism</keyword>
<keyword id="KW-0520">NAD</keyword>
<keyword id="KW-0521">NADP</keyword>
<keyword id="KW-0547">Nucleotide-binding</keyword>
<keyword id="KW-0560">Oxidoreductase</keyword>
<keyword id="KW-0594">Phospholipid biosynthesis</keyword>
<keyword id="KW-1208">Phospholipid metabolism</keyword>
<keyword id="KW-1185">Reference proteome</keyword>